<dbReference type="EC" id="4.3.2.1" evidence="1"/>
<dbReference type="EMBL" id="CP000082">
    <property type="protein sequence ID" value="AAZ17962.1"/>
    <property type="molecule type" value="Genomic_DNA"/>
</dbReference>
<dbReference type="RefSeq" id="WP_011279401.1">
    <property type="nucleotide sequence ID" value="NC_007204.1"/>
</dbReference>
<dbReference type="SMR" id="Q4FVJ6"/>
<dbReference type="STRING" id="259536.Psyc_0088"/>
<dbReference type="KEGG" id="par:Psyc_0088"/>
<dbReference type="eggNOG" id="COG0165">
    <property type="taxonomic scope" value="Bacteria"/>
</dbReference>
<dbReference type="HOGENOM" id="CLU_027272_2_3_6"/>
<dbReference type="OrthoDB" id="9769623at2"/>
<dbReference type="UniPathway" id="UPA00068">
    <property type="reaction ID" value="UER00114"/>
</dbReference>
<dbReference type="Proteomes" id="UP000000546">
    <property type="component" value="Chromosome"/>
</dbReference>
<dbReference type="GO" id="GO:0005829">
    <property type="term" value="C:cytosol"/>
    <property type="evidence" value="ECO:0007669"/>
    <property type="project" value="TreeGrafter"/>
</dbReference>
<dbReference type="GO" id="GO:0004056">
    <property type="term" value="F:argininosuccinate lyase activity"/>
    <property type="evidence" value="ECO:0007669"/>
    <property type="project" value="UniProtKB-UniRule"/>
</dbReference>
<dbReference type="GO" id="GO:0042450">
    <property type="term" value="P:arginine biosynthetic process via ornithine"/>
    <property type="evidence" value="ECO:0007669"/>
    <property type="project" value="InterPro"/>
</dbReference>
<dbReference type="GO" id="GO:0006526">
    <property type="term" value="P:L-arginine biosynthetic process"/>
    <property type="evidence" value="ECO:0007669"/>
    <property type="project" value="UniProtKB-UniRule"/>
</dbReference>
<dbReference type="CDD" id="cd01359">
    <property type="entry name" value="Argininosuccinate_lyase"/>
    <property type="match status" value="1"/>
</dbReference>
<dbReference type="FunFam" id="1.10.275.10:FF:000002">
    <property type="entry name" value="Argininosuccinate lyase"/>
    <property type="match status" value="1"/>
</dbReference>
<dbReference type="FunFam" id="1.10.40.30:FF:000001">
    <property type="entry name" value="Argininosuccinate lyase"/>
    <property type="match status" value="1"/>
</dbReference>
<dbReference type="FunFam" id="1.20.200.10:FF:000015">
    <property type="entry name" value="argininosuccinate lyase isoform X2"/>
    <property type="match status" value="1"/>
</dbReference>
<dbReference type="Gene3D" id="1.10.40.30">
    <property type="entry name" value="Fumarase/aspartase (C-terminal domain)"/>
    <property type="match status" value="1"/>
</dbReference>
<dbReference type="Gene3D" id="1.20.200.10">
    <property type="entry name" value="Fumarase/aspartase (Central domain)"/>
    <property type="match status" value="1"/>
</dbReference>
<dbReference type="Gene3D" id="1.10.275.10">
    <property type="entry name" value="Fumarase/aspartase (N-terminal domain)"/>
    <property type="match status" value="1"/>
</dbReference>
<dbReference type="HAMAP" id="MF_00006">
    <property type="entry name" value="Arg_succ_lyase"/>
    <property type="match status" value="1"/>
</dbReference>
<dbReference type="InterPro" id="IPR029419">
    <property type="entry name" value="Arg_succ_lyase_C"/>
</dbReference>
<dbReference type="InterPro" id="IPR009049">
    <property type="entry name" value="Argininosuccinate_lyase"/>
</dbReference>
<dbReference type="InterPro" id="IPR024083">
    <property type="entry name" value="Fumarase/histidase_N"/>
</dbReference>
<dbReference type="InterPro" id="IPR020557">
    <property type="entry name" value="Fumarate_lyase_CS"/>
</dbReference>
<dbReference type="InterPro" id="IPR000362">
    <property type="entry name" value="Fumarate_lyase_fam"/>
</dbReference>
<dbReference type="InterPro" id="IPR022761">
    <property type="entry name" value="Fumarate_lyase_N"/>
</dbReference>
<dbReference type="InterPro" id="IPR008948">
    <property type="entry name" value="L-Aspartase-like"/>
</dbReference>
<dbReference type="NCBIfam" id="TIGR00838">
    <property type="entry name" value="argH"/>
    <property type="match status" value="1"/>
</dbReference>
<dbReference type="PANTHER" id="PTHR43814">
    <property type="entry name" value="ARGININOSUCCINATE LYASE"/>
    <property type="match status" value="1"/>
</dbReference>
<dbReference type="PANTHER" id="PTHR43814:SF1">
    <property type="entry name" value="ARGININOSUCCINATE LYASE"/>
    <property type="match status" value="1"/>
</dbReference>
<dbReference type="Pfam" id="PF14698">
    <property type="entry name" value="ASL_C2"/>
    <property type="match status" value="1"/>
</dbReference>
<dbReference type="Pfam" id="PF00206">
    <property type="entry name" value="Lyase_1"/>
    <property type="match status" value="1"/>
</dbReference>
<dbReference type="PRINTS" id="PR00145">
    <property type="entry name" value="ARGSUCLYASE"/>
</dbReference>
<dbReference type="PRINTS" id="PR00149">
    <property type="entry name" value="FUMRATELYASE"/>
</dbReference>
<dbReference type="SUPFAM" id="SSF48557">
    <property type="entry name" value="L-aspartase-like"/>
    <property type="match status" value="1"/>
</dbReference>
<dbReference type="PROSITE" id="PS00163">
    <property type="entry name" value="FUMARATE_LYASES"/>
    <property type="match status" value="1"/>
</dbReference>
<reference key="1">
    <citation type="journal article" date="2010" name="Appl. Environ. Microbiol.">
        <title>The genome sequence of Psychrobacter arcticus 273-4, a psychroactive Siberian permafrost bacterium, reveals mechanisms for adaptation to low-temperature growth.</title>
        <authorList>
            <person name="Ayala-del-Rio H.L."/>
            <person name="Chain P.S."/>
            <person name="Grzymski J.J."/>
            <person name="Ponder M.A."/>
            <person name="Ivanova N."/>
            <person name="Bergholz P.W."/>
            <person name="Di Bartolo G."/>
            <person name="Hauser L."/>
            <person name="Land M."/>
            <person name="Bakermans C."/>
            <person name="Rodrigues D."/>
            <person name="Klappenbach J."/>
            <person name="Zarka D."/>
            <person name="Larimer F."/>
            <person name="Richardson P."/>
            <person name="Murray A."/>
            <person name="Thomashow M."/>
            <person name="Tiedje J.M."/>
        </authorList>
    </citation>
    <scope>NUCLEOTIDE SEQUENCE [LARGE SCALE GENOMIC DNA]</scope>
    <source>
        <strain>DSM 17307 / VKM B-2377 / 273-4</strain>
    </source>
</reference>
<gene>
    <name evidence="1" type="primary">argH</name>
    <name type="ordered locus">Psyc_0088</name>
</gene>
<feature type="chain" id="PRO_0000240756" description="Argininosuccinate lyase">
    <location>
        <begin position="1"/>
        <end position="457"/>
    </location>
</feature>
<protein>
    <recommendedName>
        <fullName evidence="1">Argininosuccinate lyase</fullName>
        <shortName evidence="1">ASAL</shortName>
        <ecNumber evidence="1">4.3.2.1</ecNumber>
    </recommendedName>
    <alternativeName>
        <fullName evidence="1">Arginosuccinase</fullName>
    </alternativeName>
</protein>
<organism>
    <name type="scientific">Psychrobacter arcticus (strain DSM 17307 / VKM B-2377 / 273-4)</name>
    <dbReference type="NCBI Taxonomy" id="259536"/>
    <lineage>
        <taxon>Bacteria</taxon>
        <taxon>Pseudomonadati</taxon>
        <taxon>Pseudomonadota</taxon>
        <taxon>Gammaproteobacteria</taxon>
        <taxon>Moraxellales</taxon>
        <taxon>Moraxellaceae</taxon>
        <taxon>Psychrobacter</taxon>
    </lineage>
</organism>
<evidence type="ECO:0000255" key="1">
    <source>
        <dbReference type="HAMAP-Rule" id="MF_00006"/>
    </source>
</evidence>
<sequence>MWGGRFSEATDSFVAAFTASVGFDQRFARHDIQGSIAHATMLKECSILEADDVATIIDGLQQVLREIEAGEFNWSIALEDVHMNVESRLTDIVGAVGKKLHTGRSRNDQVATDIRLWLREETDNIIALLVRLQSGLLDLAEQHTDTIMPGFTHLQTAQPVSFGHHVMAWFEMLYRDTERLVDARRRINQMPLGSAALAGTTFPIDRTITAELLGFEGICQNSLDAVSDRDFAIEFTSAASILMMHMSRMSEEIILWMSAQFNFVQIPDRFCTGSSIMPQKKNPDVPELVRGKAARVFGQLMTLLSLMKSQPLAYNKDNQEDKEPLFDCVDTLTGSLLAFADMLPNITPNKENMRAATMKGYATATDLADYLVRNGVAFRDAHEVVGNAVALGIKEGVDLSDLSLAQLQQFSNAIGDDVFDFLTLEGSLAARDHLGGTAPNQVKQAISRGRTRLEVFA</sequence>
<keyword id="KW-0028">Amino-acid biosynthesis</keyword>
<keyword id="KW-0055">Arginine biosynthesis</keyword>
<keyword id="KW-0963">Cytoplasm</keyword>
<keyword id="KW-0456">Lyase</keyword>
<keyword id="KW-1185">Reference proteome</keyword>
<name>ARLY_PSYA2</name>
<accession>Q4FVJ6</accession>
<proteinExistence type="inferred from homology"/>
<comment type="catalytic activity">
    <reaction evidence="1">
        <text>2-(N(omega)-L-arginino)succinate = fumarate + L-arginine</text>
        <dbReference type="Rhea" id="RHEA:24020"/>
        <dbReference type="ChEBI" id="CHEBI:29806"/>
        <dbReference type="ChEBI" id="CHEBI:32682"/>
        <dbReference type="ChEBI" id="CHEBI:57472"/>
        <dbReference type="EC" id="4.3.2.1"/>
    </reaction>
</comment>
<comment type="pathway">
    <text evidence="1">Amino-acid biosynthesis; L-arginine biosynthesis; L-arginine from L-ornithine and carbamoyl phosphate: step 3/3.</text>
</comment>
<comment type="subcellular location">
    <subcellularLocation>
        <location evidence="1">Cytoplasm</location>
    </subcellularLocation>
</comment>
<comment type="similarity">
    <text evidence="1">Belongs to the lyase 1 family. Argininosuccinate lyase subfamily.</text>
</comment>